<sequence>MRSGRYIGVMSGTSLDGVDVVLAAIDEHTVAQQASYCHPIPQDIKMAILGMCQGQAVTLSALGQLDTRLGILFAEAVLTLLKETELRAQDITAIGCHGQTVWHEPTGDAPCTLQIGDNNRVAALTGITTVGDFRRRDLAYGGQGAPLVPSFHHALLLHPVERRIVLNIGGIANLSLLVPGAPVRGYDTGPGNMLLDAWIWRHCAQPYDKDAMWAMSGQVNPLLLRRMLTDPYFALRAPKSTGREYFNLSWLERMLAGLPPMAPQDVQATLVELTAMSIAEQVLLVGGCERLLVCGGGARNPLIMTRLSALLPGIEVSTTDECGVSGDDMEALAFAWLASRTLSGLSGNLPSVTGASQETVLGAIYPVNAD</sequence>
<proteinExistence type="inferred from homology"/>
<accession>C6DK28</accession>
<dbReference type="EC" id="2.7.1.170" evidence="1"/>
<dbReference type="EMBL" id="CP001657">
    <property type="protein sequence ID" value="ACT13411.1"/>
    <property type="molecule type" value="Genomic_DNA"/>
</dbReference>
<dbReference type="RefSeq" id="WP_015840593.1">
    <property type="nucleotide sequence ID" value="NC_012917.1"/>
</dbReference>
<dbReference type="SMR" id="C6DK28"/>
<dbReference type="STRING" id="561230.PC1_2380"/>
<dbReference type="KEGG" id="pct:PC1_2380"/>
<dbReference type="eggNOG" id="COG2377">
    <property type="taxonomic scope" value="Bacteria"/>
</dbReference>
<dbReference type="HOGENOM" id="CLU_038782_0_0_6"/>
<dbReference type="OrthoDB" id="9763949at2"/>
<dbReference type="UniPathway" id="UPA00343"/>
<dbReference type="UniPathway" id="UPA00544"/>
<dbReference type="Proteomes" id="UP000002736">
    <property type="component" value="Chromosome"/>
</dbReference>
<dbReference type="GO" id="GO:0005524">
    <property type="term" value="F:ATP binding"/>
    <property type="evidence" value="ECO:0007669"/>
    <property type="project" value="UniProtKB-UniRule"/>
</dbReference>
<dbReference type="GO" id="GO:0016301">
    <property type="term" value="F:kinase activity"/>
    <property type="evidence" value="ECO:0007669"/>
    <property type="project" value="UniProtKB-KW"/>
</dbReference>
<dbReference type="GO" id="GO:0016773">
    <property type="term" value="F:phosphotransferase activity, alcohol group as acceptor"/>
    <property type="evidence" value="ECO:0007669"/>
    <property type="project" value="UniProtKB-UniRule"/>
</dbReference>
<dbReference type="GO" id="GO:0097175">
    <property type="term" value="P:1,6-anhydro-N-acetyl-beta-muramic acid catabolic process"/>
    <property type="evidence" value="ECO:0007669"/>
    <property type="project" value="UniProtKB-UniRule"/>
</dbReference>
<dbReference type="GO" id="GO:0006040">
    <property type="term" value="P:amino sugar metabolic process"/>
    <property type="evidence" value="ECO:0007669"/>
    <property type="project" value="InterPro"/>
</dbReference>
<dbReference type="GO" id="GO:0009254">
    <property type="term" value="P:peptidoglycan turnover"/>
    <property type="evidence" value="ECO:0007669"/>
    <property type="project" value="UniProtKB-UniRule"/>
</dbReference>
<dbReference type="CDD" id="cd24050">
    <property type="entry name" value="ASKHA_NBD_ANMK"/>
    <property type="match status" value="1"/>
</dbReference>
<dbReference type="Gene3D" id="3.30.420.40">
    <property type="match status" value="2"/>
</dbReference>
<dbReference type="HAMAP" id="MF_01270">
    <property type="entry name" value="AnhMurNAc_kinase"/>
    <property type="match status" value="1"/>
</dbReference>
<dbReference type="InterPro" id="IPR005338">
    <property type="entry name" value="Anhydro_N_Ac-Mur_kinase"/>
</dbReference>
<dbReference type="InterPro" id="IPR043129">
    <property type="entry name" value="ATPase_NBD"/>
</dbReference>
<dbReference type="NCBIfam" id="NF007138">
    <property type="entry name" value="PRK09585.1-1"/>
    <property type="match status" value="1"/>
</dbReference>
<dbReference type="NCBIfam" id="NF007139">
    <property type="entry name" value="PRK09585.1-3"/>
    <property type="match status" value="1"/>
</dbReference>
<dbReference type="NCBIfam" id="NF007148">
    <property type="entry name" value="PRK09585.3-2"/>
    <property type="match status" value="1"/>
</dbReference>
<dbReference type="PANTHER" id="PTHR30605">
    <property type="entry name" value="ANHYDRO-N-ACETYLMURAMIC ACID KINASE"/>
    <property type="match status" value="1"/>
</dbReference>
<dbReference type="PANTHER" id="PTHR30605:SF0">
    <property type="entry name" value="ANHYDRO-N-ACETYLMURAMIC ACID KINASE"/>
    <property type="match status" value="1"/>
</dbReference>
<dbReference type="Pfam" id="PF03702">
    <property type="entry name" value="AnmK"/>
    <property type="match status" value="1"/>
</dbReference>
<dbReference type="SUPFAM" id="SSF53067">
    <property type="entry name" value="Actin-like ATPase domain"/>
    <property type="match status" value="1"/>
</dbReference>
<name>ANMK_PECCP</name>
<comment type="function">
    <text evidence="1">Catalyzes the specific phosphorylation of 1,6-anhydro-N-acetylmuramic acid (anhMurNAc) with the simultaneous cleavage of the 1,6-anhydro ring, generating MurNAc-6-P. Is required for the utilization of anhMurNAc either imported from the medium or derived from its own cell wall murein, and thus plays a role in cell wall recycling.</text>
</comment>
<comment type="catalytic activity">
    <reaction evidence="1">
        <text>1,6-anhydro-N-acetyl-beta-muramate + ATP + H2O = N-acetyl-D-muramate 6-phosphate + ADP + H(+)</text>
        <dbReference type="Rhea" id="RHEA:24952"/>
        <dbReference type="ChEBI" id="CHEBI:15377"/>
        <dbReference type="ChEBI" id="CHEBI:15378"/>
        <dbReference type="ChEBI" id="CHEBI:30616"/>
        <dbReference type="ChEBI" id="CHEBI:58690"/>
        <dbReference type="ChEBI" id="CHEBI:58722"/>
        <dbReference type="ChEBI" id="CHEBI:456216"/>
        <dbReference type="EC" id="2.7.1.170"/>
    </reaction>
</comment>
<comment type="pathway">
    <text evidence="1">Amino-sugar metabolism; 1,6-anhydro-N-acetylmuramate degradation.</text>
</comment>
<comment type="pathway">
    <text evidence="1">Cell wall biogenesis; peptidoglycan recycling.</text>
</comment>
<comment type="similarity">
    <text evidence="1">Belongs to the anhydro-N-acetylmuramic acid kinase family.</text>
</comment>
<feature type="chain" id="PRO_1000214169" description="Anhydro-N-acetylmuramic acid kinase">
    <location>
        <begin position="1"/>
        <end position="370"/>
    </location>
</feature>
<feature type="binding site" evidence="1">
    <location>
        <begin position="12"/>
        <end position="19"/>
    </location>
    <ligand>
        <name>ATP</name>
        <dbReference type="ChEBI" id="CHEBI:30616"/>
    </ligand>
</feature>
<gene>
    <name evidence="1" type="primary">anmK</name>
    <name type="ordered locus">PC1_2380</name>
</gene>
<protein>
    <recommendedName>
        <fullName evidence="1">Anhydro-N-acetylmuramic acid kinase</fullName>
        <ecNumber evidence="1">2.7.1.170</ecNumber>
    </recommendedName>
    <alternativeName>
        <fullName evidence="1">AnhMurNAc kinase</fullName>
    </alternativeName>
</protein>
<evidence type="ECO:0000255" key="1">
    <source>
        <dbReference type="HAMAP-Rule" id="MF_01270"/>
    </source>
</evidence>
<organism>
    <name type="scientific">Pectobacterium carotovorum subsp. carotovorum (strain PC1)</name>
    <dbReference type="NCBI Taxonomy" id="561230"/>
    <lineage>
        <taxon>Bacteria</taxon>
        <taxon>Pseudomonadati</taxon>
        <taxon>Pseudomonadota</taxon>
        <taxon>Gammaproteobacteria</taxon>
        <taxon>Enterobacterales</taxon>
        <taxon>Pectobacteriaceae</taxon>
        <taxon>Pectobacterium</taxon>
    </lineage>
</organism>
<reference key="1">
    <citation type="submission" date="2009-07" db="EMBL/GenBank/DDBJ databases">
        <title>Complete sequence of Pectobacterium carotovorum subsp. carotovorum PC1.</title>
        <authorList>
            <consortium name="US DOE Joint Genome Institute"/>
            <person name="Lucas S."/>
            <person name="Copeland A."/>
            <person name="Lapidus A."/>
            <person name="Glavina del Rio T."/>
            <person name="Tice H."/>
            <person name="Bruce D."/>
            <person name="Goodwin L."/>
            <person name="Pitluck S."/>
            <person name="Munk A.C."/>
            <person name="Brettin T."/>
            <person name="Detter J.C."/>
            <person name="Han C."/>
            <person name="Tapia R."/>
            <person name="Larimer F."/>
            <person name="Land M."/>
            <person name="Hauser L."/>
            <person name="Kyrpides N."/>
            <person name="Mikhailova N."/>
            <person name="Balakrishnan V."/>
            <person name="Glasner J."/>
            <person name="Perna N.T."/>
        </authorList>
    </citation>
    <scope>NUCLEOTIDE SEQUENCE [LARGE SCALE GENOMIC DNA]</scope>
    <source>
        <strain>PC1</strain>
    </source>
</reference>
<keyword id="KW-0067">ATP-binding</keyword>
<keyword id="KW-0119">Carbohydrate metabolism</keyword>
<keyword id="KW-0418">Kinase</keyword>
<keyword id="KW-0547">Nucleotide-binding</keyword>
<keyword id="KW-0808">Transferase</keyword>